<proteinExistence type="inferred from homology"/>
<keyword id="KW-0687">Ribonucleoprotein</keyword>
<keyword id="KW-0689">Ribosomal protein</keyword>
<dbReference type="EMBL" id="CP001091">
    <property type="protein sequence ID" value="ACE62524.1"/>
    <property type="molecule type" value="Genomic_DNA"/>
</dbReference>
<dbReference type="RefSeq" id="WP_005599334.1">
    <property type="nucleotide sequence ID" value="NC_010939.1"/>
</dbReference>
<dbReference type="SMR" id="B3GZ38"/>
<dbReference type="GeneID" id="48600079"/>
<dbReference type="KEGG" id="apa:APP7_1872"/>
<dbReference type="HOGENOM" id="CLU_100590_5_1_6"/>
<dbReference type="Proteomes" id="UP000001226">
    <property type="component" value="Chromosome"/>
</dbReference>
<dbReference type="GO" id="GO:0005737">
    <property type="term" value="C:cytoplasm"/>
    <property type="evidence" value="ECO:0007669"/>
    <property type="project" value="UniProtKB-ARBA"/>
</dbReference>
<dbReference type="GO" id="GO:0015935">
    <property type="term" value="C:small ribosomal subunit"/>
    <property type="evidence" value="ECO:0007669"/>
    <property type="project" value="TreeGrafter"/>
</dbReference>
<dbReference type="GO" id="GO:0003735">
    <property type="term" value="F:structural constituent of ribosome"/>
    <property type="evidence" value="ECO:0007669"/>
    <property type="project" value="InterPro"/>
</dbReference>
<dbReference type="GO" id="GO:0006412">
    <property type="term" value="P:translation"/>
    <property type="evidence" value="ECO:0007669"/>
    <property type="project" value="UniProtKB-UniRule"/>
</dbReference>
<dbReference type="FunFam" id="3.30.1320.10:FF:000001">
    <property type="entry name" value="30S ribosomal protein S16"/>
    <property type="match status" value="1"/>
</dbReference>
<dbReference type="Gene3D" id="3.30.1320.10">
    <property type="match status" value="1"/>
</dbReference>
<dbReference type="HAMAP" id="MF_00385">
    <property type="entry name" value="Ribosomal_bS16"/>
    <property type="match status" value="1"/>
</dbReference>
<dbReference type="InterPro" id="IPR000307">
    <property type="entry name" value="Ribosomal_bS16"/>
</dbReference>
<dbReference type="InterPro" id="IPR020592">
    <property type="entry name" value="Ribosomal_bS16_CS"/>
</dbReference>
<dbReference type="InterPro" id="IPR023803">
    <property type="entry name" value="Ribosomal_bS16_dom_sf"/>
</dbReference>
<dbReference type="NCBIfam" id="TIGR00002">
    <property type="entry name" value="S16"/>
    <property type="match status" value="1"/>
</dbReference>
<dbReference type="PANTHER" id="PTHR12919">
    <property type="entry name" value="30S RIBOSOMAL PROTEIN S16"/>
    <property type="match status" value="1"/>
</dbReference>
<dbReference type="PANTHER" id="PTHR12919:SF20">
    <property type="entry name" value="SMALL RIBOSOMAL SUBUNIT PROTEIN BS16M"/>
    <property type="match status" value="1"/>
</dbReference>
<dbReference type="Pfam" id="PF00886">
    <property type="entry name" value="Ribosomal_S16"/>
    <property type="match status" value="1"/>
</dbReference>
<dbReference type="SUPFAM" id="SSF54565">
    <property type="entry name" value="Ribosomal protein S16"/>
    <property type="match status" value="1"/>
</dbReference>
<dbReference type="PROSITE" id="PS00732">
    <property type="entry name" value="RIBOSOMAL_S16"/>
    <property type="match status" value="1"/>
</dbReference>
<comment type="similarity">
    <text evidence="1">Belongs to the bacterial ribosomal protein bS16 family.</text>
</comment>
<reference key="1">
    <citation type="submission" date="2008-06" db="EMBL/GenBank/DDBJ databases">
        <title>Genome and proteome analysis of A. pleuropneumoniae serotype 7.</title>
        <authorList>
            <person name="Linke B."/>
            <person name="Buettner F."/>
            <person name="Martinez-Arias R."/>
            <person name="Goesmann A."/>
            <person name="Baltes N."/>
            <person name="Tegetmeyer H."/>
            <person name="Singh M."/>
            <person name="Gerlach G.F."/>
        </authorList>
    </citation>
    <scope>NUCLEOTIDE SEQUENCE [LARGE SCALE GENOMIC DNA]</scope>
    <source>
        <strain>AP76</strain>
    </source>
</reference>
<sequence length="82" mass="9056">MVTIRLTRGGAKKRPFYQIVVADSRSPRDGRFIERIGFFNPLAAGQAERLRLDVAKVDAWVAKGADLSDRVASLVKEARKAA</sequence>
<gene>
    <name evidence="1" type="primary">rpsP</name>
    <name type="ordered locus">APP7_1872</name>
</gene>
<protein>
    <recommendedName>
        <fullName evidence="1">Small ribosomal subunit protein bS16</fullName>
    </recommendedName>
    <alternativeName>
        <fullName evidence="2">30S ribosomal protein S16</fullName>
    </alternativeName>
</protein>
<evidence type="ECO:0000255" key="1">
    <source>
        <dbReference type="HAMAP-Rule" id="MF_00385"/>
    </source>
</evidence>
<evidence type="ECO:0000305" key="2"/>
<feature type="chain" id="PRO_1000196315" description="Small ribosomal subunit protein bS16">
    <location>
        <begin position="1"/>
        <end position="82"/>
    </location>
</feature>
<accession>B3GZ38</accession>
<organism>
    <name type="scientific">Actinobacillus pleuropneumoniae serotype 7 (strain AP76)</name>
    <dbReference type="NCBI Taxonomy" id="537457"/>
    <lineage>
        <taxon>Bacteria</taxon>
        <taxon>Pseudomonadati</taxon>
        <taxon>Pseudomonadota</taxon>
        <taxon>Gammaproteobacteria</taxon>
        <taxon>Pasteurellales</taxon>
        <taxon>Pasteurellaceae</taxon>
        <taxon>Actinobacillus</taxon>
    </lineage>
</organism>
<name>RS16_ACTP7</name>